<protein>
    <recommendedName>
        <fullName evidence="1">UDP-N-acetylglucosamine 1-carboxyvinyltransferase</fullName>
        <ecNumber evidence="1">2.5.1.7</ecNumber>
    </recommendedName>
    <alternativeName>
        <fullName evidence="1">Enoylpyruvate transferase</fullName>
    </alternativeName>
    <alternativeName>
        <fullName evidence="1">UDP-N-acetylglucosamine enolpyruvyl transferase</fullName>
        <shortName evidence="1">EPT</shortName>
    </alternativeName>
</protein>
<name>MURA_ECO81</name>
<accession>B7N0X1</accession>
<dbReference type="EC" id="2.5.1.7" evidence="1"/>
<dbReference type="EMBL" id="CU928162">
    <property type="protein sequence ID" value="CAR09989.2"/>
    <property type="molecule type" value="Genomic_DNA"/>
</dbReference>
<dbReference type="RefSeq" id="WP_000357259.1">
    <property type="nucleotide sequence ID" value="NC_011745.1"/>
</dbReference>
<dbReference type="SMR" id="B7N0X1"/>
<dbReference type="GeneID" id="93778792"/>
<dbReference type="KEGG" id="ecq:ECED1_3847"/>
<dbReference type="HOGENOM" id="CLU_027387_0_0_6"/>
<dbReference type="UniPathway" id="UPA00219"/>
<dbReference type="Proteomes" id="UP000000748">
    <property type="component" value="Chromosome"/>
</dbReference>
<dbReference type="GO" id="GO:0005737">
    <property type="term" value="C:cytoplasm"/>
    <property type="evidence" value="ECO:0007669"/>
    <property type="project" value="UniProtKB-SubCell"/>
</dbReference>
<dbReference type="GO" id="GO:0008760">
    <property type="term" value="F:UDP-N-acetylglucosamine 1-carboxyvinyltransferase activity"/>
    <property type="evidence" value="ECO:0007669"/>
    <property type="project" value="UniProtKB-UniRule"/>
</dbReference>
<dbReference type="GO" id="GO:0051301">
    <property type="term" value="P:cell division"/>
    <property type="evidence" value="ECO:0007669"/>
    <property type="project" value="UniProtKB-KW"/>
</dbReference>
<dbReference type="GO" id="GO:0071555">
    <property type="term" value="P:cell wall organization"/>
    <property type="evidence" value="ECO:0007669"/>
    <property type="project" value="UniProtKB-KW"/>
</dbReference>
<dbReference type="GO" id="GO:0009252">
    <property type="term" value="P:peptidoglycan biosynthetic process"/>
    <property type="evidence" value="ECO:0007669"/>
    <property type="project" value="UniProtKB-UniRule"/>
</dbReference>
<dbReference type="GO" id="GO:0008360">
    <property type="term" value="P:regulation of cell shape"/>
    <property type="evidence" value="ECO:0007669"/>
    <property type="project" value="UniProtKB-KW"/>
</dbReference>
<dbReference type="GO" id="GO:0019277">
    <property type="term" value="P:UDP-N-acetylgalactosamine biosynthetic process"/>
    <property type="evidence" value="ECO:0007669"/>
    <property type="project" value="InterPro"/>
</dbReference>
<dbReference type="CDD" id="cd01555">
    <property type="entry name" value="UdpNAET"/>
    <property type="match status" value="1"/>
</dbReference>
<dbReference type="FunFam" id="3.65.10.10:FF:000002">
    <property type="entry name" value="UDP-N-acetylglucosamine 1-carboxyvinyltransferase"/>
    <property type="match status" value="1"/>
</dbReference>
<dbReference type="Gene3D" id="3.65.10.10">
    <property type="entry name" value="Enolpyruvate transferase domain"/>
    <property type="match status" value="2"/>
</dbReference>
<dbReference type="HAMAP" id="MF_00111">
    <property type="entry name" value="MurA"/>
    <property type="match status" value="1"/>
</dbReference>
<dbReference type="InterPro" id="IPR001986">
    <property type="entry name" value="Enolpyruvate_Tfrase_dom"/>
</dbReference>
<dbReference type="InterPro" id="IPR036968">
    <property type="entry name" value="Enolpyruvate_Tfrase_sf"/>
</dbReference>
<dbReference type="InterPro" id="IPR050068">
    <property type="entry name" value="MurA_subfamily"/>
</dbReference>
<dbReference type="InterPro" id="IPR013792">
    <property type="entry name" value="RNA3'P_cycl/enolpyr_Trfase_a/b"/>
</dbReference>
<dbReference type="InterPro" id="IPR005750">
    <property type="entry name" value="UDP_GlcNAc_COvinyl_MurA"/>
</dbReference>
<dbReference type="NCBIfam" id="TIGR01072">
    <property type="entry name" value="murA"/>
    <property type="match status" value="1"/>
</dbReference>
<dbReference type="NCBIfam" id="NF006873">
    <property type="entry name" value="PRK09369.1"/>
    <property type="match status" value="1"/>
</dbReference>
<dbReference type="PANTHER" id="PTHR43783">
    <property type="entry name" value="UDP-N-ACETYLGLUCOSAMINE 1-CARBOXYVINYLTRANSFERASE"/>
    <property type="match status" value="1"/>
</dbReference>
<dbReference type="PANTHER" id="PTHR43783:SF1">
    <property type="entry name" value="UDP-N-ACETYLGLUCOSAMINE 1-CARBOXYVINYLTRANSFERASE"/>
    <property type="match status" value="1"/>
</dbReference>
<dbReference type="Pfam" id="PF00275">
    <property type="entry name" value="EPSP_synthase"/>
    <property type="match status" value="1"/>
</dbReference>
<dbReference type="SUPFAM" id="SSF55205">
    <property type="entry name" value="EPT/RTPC-like"/>
    <property type="match status" value="1"/>
</dbReference>
<sequence length="419" mass="44818">MDKFRVQGPTKLQGEVTISGAKNAALPILFAALLAEEPVEIQNVPKLKDVDTSMKLLSQLGAKVERNGSVHIDARDVNVFCAPYDLVKTMRASIWALGPLVARFGQGQVSLPGGCTIGARPVDLHISGLEQLGATIKLEEGYVKASVDGRLKGAHIVMDKVSVGATVTIMCAATLAEGTTIIENAAREPEIVDTANFLITLGAKISGQGTDRIVIEGVERLGGGVYRVLPDRIETGTFLVAAAISRGKIICRNAQPDTLDAVLAKLRDAGADIEVGEDWISLDMHGKRPKAVNVRTAPHPAFPTDMQAQFTLLNLVAEGTGFITETVFENRFMHVPELSRMGAHAEIESNTVICHGVEKLSGAQVMATDLRASASLVLAGCIAEGTTVVDRIYHIDRGYERIEDKLRALGANIERVKGE</sequence>
<organism>
    <name type="scientific">Escherichia coli O81 (strain ED1a)</name>
    <dbReference type="NCBI Taxonomy" id="585397"/>
    <lineage>
        <taxon>Bacteria</taxon>
        <taxon>Pseudomonadati</taxon>
        <taxon>Pseudomonadota</taxon>
        <taxon>Gammaproteobacteria</taxon>
        <taxon>Enterobacterales</taxon>
        <taxon>Enterobacteriaceae</taxon>
        <taxon>Escherichia</taxon>
    </lineage>
</organism>
<feature type="chain" id="PRO_1000192084" description="UDP-N-acetylglucosamine 1-carboxyvinyltransferase">
    <location>
        <begin position="1"/>
        <end position="419"/>
    </location>
</feature>
<feature type="active site" description="Proton donor" evidence="1">
    <location>
        <position position="115"/>
    </location>
</feature>
<feature type="binding site" evidence="1">
    <location>
        <begin position="22"/>
        <end position="23"/>
    </location>
    <ligand>
        <name>phosphoenolpyruvate</name>
        <dbReference type="ChEBI" id="CHEBI:58702"/>
    </ligand>
</feature>
<feature type="binding site" evidence="1">
    <location>
        <position position="91"/>
    </location>
    <ligand>
        <name>UDP-N-acetyl-alpha-D-glucosamine</name>
        <dbReference type="ChEBI" id="CHEBI:57705"/>
    </ligand>
</feature>
<feature type="binding site" evidence="1">
    <location>
        <begin position="120"/>
        <end position="124"/>
    </location>
    <ligand>
        <name>UDP-N-acetyl-alpha-D-glucosamine</name>
        <dbReference type="ChEBI" id="CHEBI:57705"/>
    </ligand>
</feature>
<feature type="binding site" evidence="1">
    <location>
        <begin position="160"/>
        <end position="163"/>
    </location>
    <ligand>
        <name>UDP-N-acetyl-alpha-D-glucosamine</name>
        <dbReference type="ChEBI" id="CHEBI:57705"/>
    </ligand>
</feature>
<feature type="binding site" evidence="1">
    <location>
        <position position="305"/>
    </location>
    <ligand>
        <name>UDP-N-acetyl-alpha-D-glucosamine</name>
        <dbReference type="ChEBI" id="CHEBI:57705"/>
    </ligand>
</feature>
<feature type="binding site" evidence="1">
    <location>
        <position position="327"/>
    </location>
    <ligand>
        <name>UDP-N-acetyl-alpha-D-glucosamine</name>
        <dbReference type="ChEBI" id="CHEBI:57705"/>
    </ligand>
</feature>
<feature type="modified residue" description="2-(S-cysteinyl)pyruvic acid O-phosphothioketal" evidence="1">
    <location>
        <position position="115"/>
    </location>
</feature>
<keyword id="KW-0131">Cell cycle</keyword>
<keyword id="KW-0132">Cell division</keyword>
<keyword id="KW-0133">Cell shape</keyword>
<keyword id="KW-0961">Cell wall biogenesis/degradation</keyword>
<keyword id="KW-0963">Cytoplasm</keyword>
<keyword id="KW-0573">Peptidoglycan synthesis</keyword>
<keyword id="KW-0670">Pyruvate</keyword>
<keyword id="KW-0808">Transferase</keyword>
<comment type="function">
    <text evidence="1">Cell wall formation. Adds enolpyruvyl to UDP-N-acetylglucosamine.</text>
</comment>
<comment type="catalytic activity">
    <reaction evidence="1">
        <text>phosphoenolpyruvate + UDP-N-acetyl-alpha-D-glucosamine = UDP-N-acetyl-3-O-(1-carboxyvinyl)-alpha-D-glucosamine + phosphate</text>
        <dbReference type="Rhea" id="RHEA:18681"/>
        <dbReference type="ChEBI" id="CHEBI:43474"/>
        <dbReference type="ChEBI" id="CHEBI:57705"/>
        <dbReference type="ChEBI" id="CHEBI:58702"/>
        <dbReference type="ChEBI" id="CHEBI:68483"/>
        <dbReference type="EC" id="2.5.1.7"/>
    </reaction>
</comment>
<comment type="pathway">
    <text evidence="1">Cell wall biogenesis; peptidoglycan biosynthesis.</text>
</comment>
<comment type="subcellular location">
    <subcellularLocation>
        <location evidence="1">Cytoplasm</location>
    </subcellularLocation>
</comment>
<comment type="similarity">
    <text evidence="1">Belongs to the EPSP synthase family. MurA subfamily.</text>
</comment>
<evidence type="ECO:0000255" key="1">
    <source>
        <dbReference type="HAMAP-Rule" id="MF_00111"/>
    </source>
</evidence>
<gene>
    <name evidence="1" type="primary">murA</name>
    <name type="ordered locus">ECED1_3847</name>
</gene>
<proteinExistence type="inferred from homology"/>
<reference key="1">
    <citation type="journal article" date="2009" name="PLoS Genet.">
        <title>Organised genome dynamics in the Escherichia coli species results in highly diverse adaptive paths.</title>
        <authorList>
            <person name="Touchon M."/>
            <person name="Hoede C."/>
            <person name="Tenaillon O."/>
            <person name="Barbe V."/>
            <person name="Baeriswyl S."/>
            <person name="Bidet P."/>
            <person name="Bingen E."/>
            <person name="Bonacorsi S."/>
            <person name="Bouchier C."/>
            <person name="Bouvet O."/>
            <person name="Calteau A."/>
            <person name="Chiapello H."/>
            <person name="Clermont O."/>
            <person name="Cruveiller S."/>
            <person name="Danchin A."/>
            <person name="Diard M."/>
            <person name="Dossat C."/>
            <person name="Karoui M.E."/>
            <person name="Frapy E."/>
            <person name="Garry L."/>
            <person name="Ghigo J.M."/>
            <person name="Gilles A.M."/>
            <person name="Johnson J."/>
            <person name="Le Bouguenec C."/>
            <person name="Lescat M."/>
            <person name="Mangenot S."/>
            <person name="Martinez-Jehanne V."/>
            <person name="Matic I."/>
            <person name="Nassif X."/>
            <person name="Oztas S."/>
            <person name="Petit M.A."/>
            <person name="Pichon C."/>
            <person name="Rouy Z."/>
            <person name="Ruf C.S."/>
            <person name="Schneider D."/>
            <person name="Tourret J."/>
            <person name="Vacherie B."/>
            <person name="Vallenet D."/>
            <person name="Medigue C."/>
            <person name="Rocha E.P.C."/>
            <person name="Denamur E."/>
        </authorList>
    </citation>
    <scope>NUCLEOTIDE SEQUENCE [LARGE SCALE GENOMIC DNA]</scope>
    <source>
        <strain>ED1a</strain>
    </source>
</reference>